<gene>
    <name evidence="6 8" type="primary">KCNK12</name>
</gene>
<proteinExistence type="evidence at protein level"/>
<accession>Q9HB15</accession>
<evidence type="ECO:0000250" key="1">
    <source>
        <dbReference type="UniProtKB" id="P57789"/>
    </source>
</evidence>
<evidence type="ECO:0000255" key="2"/>
<evidence type="ECO:0000269" key="3">
    <source>
    </source>
</evidence>
<evidence type="ECO:0000269" key="4">
    <source>
    </source>
</evidence>
<evidence type="ECO:0000303" key="5">
    <source>
    </source>
</evidence>
<evidence type="ECO:0000303" key="6">
    <source>
    </source>
</evidence>
<evidence type="ECO:0000305" key="7"/>
<evidence type="ECO:0000312" key="8">
    <source>
        <dbReference type="HGNC" id="HGNC:6274"/>
    </source>
</evidence>
<comment type="function">
    <text evidence="3 4">K(+) channel subunit that may homo- and heterodimerize to form functional channels with distinct regulatory and gating properties. Can heterodimerize with KCNK13 subunit to conduct K(+) outward rectifying currents at the plasma membrane. The homodimers are mainly retained in the endoplasmic reticulum compartment and may be targeted to the cell surface upon phosphorylation or other activation signals yet to be elucidated.</text>
</comment>
<comment type="catalytic activity">
    <reaction evidence="4">
        <text>K(+)(in) = K(+)(out)</text>
        <dbReference type="Rhea" id="RHEA:29463"/>
        <dbReference type="ChEBI" id="CHEBI:29103"/>
    </reaction>
</comment>
<comment type="subunit">
    <text evidence="4">Homodimer. Heterodimer with KCNK13.</text>
</comment>
<comment type="subcellular location">
    <subcellularLocation>
        <location evidence="4">Cell membrane</location>
        <topology evidence="2">Multi-pass membrane protein</topology>
    </subcellularLocation>
    <subcellularLocation>
        <location evidence="3 4">Endoplasmic reticulum membrane</location>
        <topology evidence="2">Multi-pass membrane protein</topology>
    </subcellularLocation>
</comment>
<comment type="domain">
    <text evidence="1">Each subunit contributes two pore-forming domains 1 and 2 which assemble to form a single pore with M2 and M4 transmembrane helices lining the central cavity and M1 and M3 facing the lipid bilayer. The transmembrane helices are bridged by the selectivity filters 1 and 2 that coordinate the permeant ions. Up to four ions can simultaneously occupy the selectivity filter and at least two elementary charges must translocate across the filter to convert it into the open conformation.</text>
</comment>
<comment type="similarity">
    <text evidence="7">Belongs to the two pore domain potassium channel (TC 1.A.1.8) family.</text>
</comment>
<name>KCNKC_HUMAN</name>
<protein>
    <recommendedName>
        <fullName>Potassium channel subfamily K member 12</fullName>
    </recommendedName>
    <alternativeName>
        <fullName evidence="5">Tandem pore domain halothane-inhibited potassium channel 2</fullName>
        <shortName evidence="5">THIK-2</shortName>
    </alternativeName>
</protein>
<keyword id="KW-1003">Cell membrane</keyword>
<keyword id="KW-0256">Endoplasmic reticulum</keyword>
<keyword id="KW-0325">Glycoprotein</keyword>
<keyword id="KW-0407">Ion channel</keyword>
<keyword id="KW-0406">Ion transport</keyword>
<keyword id="KW-0472">Membrane</keyword>
<keyword id="KW-0479">Metal-binding</keyword>
<keyword id="KW-0630">Potassium</keyword>
<keyword id="KW-0631">Potassium channel</keyword>
<keyword id="KW-0633">Potassium transport</keyword>
<keyword id="KW-1185">Reference proteome</keyword>
<keyword id="KW-0812">Transmembrane</keyword>
<keyword id="KW-1133">Transmembrane helix</keyword>
<keyword id="KW-0813">Transport</keyword>
<keyword id="KW-0851">Voltage-gated channel</keyword>
<reference key="1">
    <citation type="journal article" date="2001" name="J. Biol. Chem.">
        <title>THIK-1 and THIK-2, a novel subfamily of tandem pore domain K+ channels.</title>
        <authorList>
            <person name="Rajan S."/>
            <person name="Wischmeyer E."/>
            <person name="Karschin C."/>
            <person name="Preisig-Mueller R."/>
            <person name="Grzeschik K.-H."/>
            <person name="Daut J."/>
            <person name="Karschin A."/>
            <person name="Derst C."/>
        </authorList>
    </citation>
    <scope>NUCLEOTIDE SEQUENCE [MRNA]</scope>
</reference>
<reference key="2">
    <citation type="journal article" date="2004" name="Genome Res.">
        <title>The status, quality, and expansion of the NIH full-length cDNA project: the Mammalian Gene Collection (MGC).</title>
        <authorList>
            <consortium name="The MGC Project Team"/>
        </authorList>
    </citation>
    <scope>NUCLEOTIDE SEQUENCE [LARGE SCALE MRNA]</scope>
    <source>
        <tissue>PNS</tissue>
    </source>
</reference>
<reference key="3">
    <citation type="journal article" date="2013" name="J. Biol. Chem.">
        <title>Silencing of the tandem pore domain halothane-inhibited K+ channel 2 (THIK2) relies on combined intracellular retention and low intrinsic activity at the plasma membrane.</title>
        <authorList>
            <person name="Chatelain F.C."/>
            <person name="Bichet D."/>
            <person name="Feliciangeli S."/>
            <person name="Larroque M.M."/>
            <person name="Braud V.M."/>
            <person name="Douguet D."/>
            <person name="Lesage F."/>
        </authorList>
    </citation>
    <scope>FUNCTION</scope>
    <scope>SUBCELLULAR LOCATION</scope>
    <scope>REGION</scope>
    <scope>MUTAGENESIS OF ARG-11; ARG-12; SER-13; ARG-14; ARG-15; ARG-16; GLY-131; ALA-155; ILE-158; LEU-163 AND LEU-165</scope>
</reference>
<reference key="4">
    <citation type="journal article" date="2014" name="J. Biol. Chem.">
        <title>Tandem pore domain halothane-inhibited K+ channel subunits THIK1 and THIK2 assemble and form active channels.</title>
        <authorList>
            <person name="Blin S."/>
            <person name="Chatelain F.C."/>
            <person name="Feliciangeli S."/>
            <person name="Kang D."/>
            <person name="Lesage F."/>
            <person name="Bichet D."/>
        </authorList>
    </citation>
    <scope>FUNCTION</scope>
    <scope>TRANSPORTER ACTIVITY</scope>
    <scope>SUBUNIT</scope>
    <scope>INTERACTION WITH KCNK13</scope>
    <scope>SUBCELLULAR LOCATION</scope>
    <scope>MUTAGENESIS OF ARG-11; ARG-12; ARG-14; ARG-15; ARG-16; GLY-131; ALA-155 AND ILE-158</scope>
</reference>
<sequence length="430" mass="46889">MSSRSPRPPPRRSRRRLPRPSCCCCCCRRSHLNEDTGRFVLLAALIGLYLVAGATVFSALESPGEAEARARWGATLRNFSAAHGVAEPELRAFLRHYEAALAAGVRADALRPRWDFPGAFYFVGTVVSTIGFGMTTPATVGGKAFLIAYGLFGCAGTILFFNLFLERIISLLAFIMRACRERQLRRSGLLPATFRRGSALSEADSLAGWKPSVYHVLLILGLFAVLLSCCASAMYTSVEGWDYVDSLYFCFVTFSTIGFGDLVSSQHAAYRNQGLYRLGNFLFILLGVCCIYSLFNVISILIKQVLNWMLRKLSCRCCARCCPAPGAPLARRNAITPGSRLRRRLAALGADPAARDSDAEGRRLSGELISMRDLTASNKVSLALLQKQLSETANGYPRSVCVNTRQNGFSGGVGALGIMNNRLAETSASR</sequence>
<dbReference type="EMBL" id="AF287302">
    <property type="protein sequence ID" value="AAG32313.1"/>
    <property type="molecule type" value="mRNA"/>
</dbReference>
<dbReference type="EMBL" id="BC047749">
    <property type="protein sequence ID" value="AAH47749.1"/>
    <property type="molecule type" value="mRNA"/>
</dbReference>
<dbReference type="CCDS" id="CCDS1835.1"/>
<dbReference type="RefSeq" id="NP_071338.1">
    <property type="nucleotide sequence ID" value="NM_022055.2"/>
</dbReference>
<dbReference type="SMR" id="Q9HB15"/>
<dbReference type="BioGRID" id="121172">
    <property type="interactions" value="2"/>
</dbReference>
<dbReference type="FunCoup" id="Q9HB15">
    <property type="interactions" value="12"/>
</dbReference>
<dbReference type="IntAct" id="Q9HB15">
    <property type="interactions" value="1"/>
</dbReference>
<dbReference type="MINT" id="Q9HB15"/>
<dbReference type="STRING" id="9606.ENSP00000327611"/>
<dbReference type="GlyCosmos" id="Q9HB15">
    <property type="glycosylation" value="1 site, No reported glycans"/>
</dbReference>
<dbReference type="GlyGen" id="Q9HB15">
    <property type="glycosylation" value="2 sites"/>
</dbReference>
<dbReference type="iPTMnet" id="Q9HB15"/>
<dbReference type="PhosphoSitePlus" id="Q9HB15"/>
<dbReference type="BioMuta" id="KCNK12"/>
<dbReference type="DMDM" id="24636285"/>
<dbReference type="MassIVE" id="Q9HB15"/>
<dbReference type="PaxDb" id="9606-ENSP00000327611"/>
<dbReference type="PeptideAtlas" id="Q9HB15"/>
<dbReference type="ProteomicsDB" id="81471"/>
<dbReference type="Antibodypedia" id="30072">
    <property type="antibodies" value="130 antibodies from 25 providers"/>
</dbReference>
<dbReference type="DNASU" id="56660"/>
<dbReference type="Ensembl" id="ENST00000327876.5">
    <property type="protein sequence ID" value="ENSP00000327611.3"/>
    <property type="gene ID" value="ENSG00000184261.5"/>
</dbReference>
<dbReference type="GeneID" id="56660"/>
<dbReference type="KEGG" id="hsa:56660"/>
<dbReference type="MANE-Select" id="ENST00000327876.5">
    <property type="protein sequence ID" value="ENSP00000327611.3"/>
    <property type="RefSeq nucleotide sequence ID" value="NM_022055.2"/>
    <property type="RefSeq protein sequence ID" value="NP_071338.1"/>
</dbReference>
<dbReference type="UCSC" id="uc002rwb.4">
    <property type="organism name" value="human"/>
</dbReference>
<dbReference type="AGR" id="HGNC:6274"/>
<dbReference type="CTD" id="56660"/>
<dbReference type="DisGeNET" id="56660"/>
<dbReference type="GeneCards" id="KCNK12"/>
<dbReference type="HGNC" id="HGNC:6274">
    <property type="gene designation" value="KCNK12"/>
</dbReference>
<dbReference type="HPA" id="ENSG00000184261">
    <property type="expression patterns" value="Tissue enriched (brain)"/>
</dbReference>
<dbReference type="MIM" id="607366">
    <property type="type" value="gene"/>
</dbReference>
<dbReference type="neXtProt" id="NX_Q9HB15"/>
<dbReference type="OpenTargets" id="ENSG00000184261"/>
<dbReference type="PharmGKB" id="PA30054"/>
<dbReference type="VEuPathDB" id="HostDB:ENSG00000184261"/>
<dbReference type="eggNOG" id="KOG4404">
    <property type="taxonomic scope" value="Eukaryota"/>
</dbReference>
<dbReference type="GeneTree" id="ENSGT00940000161424"/>
<dbReference type="HOGENOM" id="CLU_022504_3_1_1"/>
<dbReference type="InParanoid" id="Q9HB15"/>
<dbReference type="OMA" id="MRACHER"/>
<dbReference type="OrthoDB" id="297496at2759"/>
<dbReference type="PAN-GO" id="Q9HB15">
    <property type="GO annotations" value="5 GO annotations based on evolutionary models"/>
</dbReference>
<dbReference type="PhylomeDB" id="Q9HB15"/>
<dbReference type="TreeFam" id="TF313947"/>
<dbReference type="PathwayCommons" id="Q9HB15"/>
<dbReference type="Reactome" id="R-HSA-5576886">
    <property type="pathway name" value="Phase 4 - resting membrane potential"/>
</dbReference>
<dbReference type="SignaLink" id="Q9HB15"/>
<dbReference type="BioGRID-ORCS" id="56660">
    <property type="hits" value="12 hits in 1153 CRISPR screens"/>
</dbReference>
<dbReference type="GeneWiki" id="KCNK12"/>
<dbReference type="GenomeRNAi" id="56660"/>
<dbReference type="Pharos" id="Q9HB15">
    <property type="development level" value="Tbio"/>
</dbReference>
<dbReference type="PRO" id="PR:Q9HB15"/>
<dbReference type="Proteomes" id="UP000005640">
    <property type="component" value="Chromosome 2"/>
</dbReference>
<dbReference type="RNAct" id="Q9HB15">
    <property type="molecule type" value="protein"/>
</dbReference>
<dbReference type="Bgee" id="ENSG00000184261">
    <property type="expression patterns" value="Expressed in olfactory bulb and 83 other cell types or tissues"/>
</dbReference>
<dbReference type="GO" id="GO:0005789">
    <property type="term" value="C:endoplasmic reticulum membrane"/>
    <property type="evidence" value="ECO:0000314"/>
    <property type="project" value="UniProtKB"/>
</dbReference>
<dbReference type="GO" id="GO:0034702">
    <property type="term" value="C:monoatomic ion channel complex"/>
    <property type="evidence" value="ECO:0007669"/>
    <property type="project" value="UniProtKB-KW"/>
</dbReference>
<dbReference type="GO" id="GO:0005886">
    <property type="term" value="C:plasma membrane"/>
    <property type="evidence" value="ECO:0000314"/>
    <property type="project" value="UniProtKB"/>
</dbReference>
<dbReference type="GO" id="GO:0042802">
    <property type="term" value="F:identical protein binding"/>
    <property type="evidence" value="ECO:0000314"/>
    <property type="project" value="UniProtKB"/>
</dbReference>
<dbReference type="GO" id="GO:0046872">
    <property type="term" value="F:metal ion binding"/>
    <property type="evidence" value="ECO:0007669"/>
    <property type="project" value="UniProtKB-KW"/>
</dbReference>
<dbReference type="GO" id="GO:0015271">
    <property type="term" value="F:outward rectifier potassium channel activity"/>
    <property type="evidence" value="ECO:0000318"/>
    <property type="project" value="GO_Central"/>
</dbReference>
<dbReference type="GO" id="GO:0005267">
    <property type="term" value="F:potassium channel activity"/>
    <property type="evidence" value="ECO:0000314"/>
    <property type="project" value="UniProtKB"/>
</dbReference>
<dbReference type="GO" id="GO:0022841">
    <property type="term" value="F:potassium ion leak channel activity"/>
    <property type="evidence" value="ECO:0000318"/>
    <property type="project" value="GO_Central"/>
</dbReference>
<dbReference type="GO" id="GO:0046982">
    <property type="term" value="F:protein heterodimerization activity"/>
    <property type="evidence" value="ECO:0000314"/>
    <property type="project" value="UniProtKB"/>
</dbReference>
<dbReference type="GO" id="GO:0071805">
    <property type="term" value="P:potassium ion transmembrane transport"/>
    <property type="evidence" value="ECO:0000318"/>
    <property type="project" value="GO_Central"/>
</dbReference>
<dbReference type="FunFam" id="1.10.287.70:FF:000070">
    <property type="entry name" value="Potassium channel, subfamily K, member 12 like"/>
    <property type="match status" value="1"/>
</dbReference>
<dbReference type="Gene3D" id="1.10.287.70">
    <property type="match status" value="1"/>
</dbReference>
<dbReference type="InterPro" id="IPR003280">
    <property type="entry name" value="2pore_dom_K_chnl"/>
</dbReference>
<dbReference type="InterPro" id="IPR005410">
    <property type="entry name" value="2pore_dom_K_chnl_THIK"/>
</dbReference>
<dbReference type="InterPro" id="IPR013099">
    <property type="entry name" value="K_chnl_dom"/>
</dbReference>
<dbReference type="PANTHER" id="PTHR11003:SF11">
    <property type="entry name" value="POTASSIUM CHANNEL SUBFAMILY K MEMBER 12"/>
    <property type="match status" value="1"/>
</dbReference>
<dbReference type="PANTHER" id="PTHR11003">
    <property type="entry name" value="POTASSIUM CHANNEL, SUBFAMILY K"/>
    <property type="match status" value="1"/>
</dbReference>
<dbReference type="Pfam" id="PF07885">
    <property type="entry name" value="Ion_trans_2"/>
    <property type="match status" value="2"/>
</dbReference>
<dbReference type="PRINTS" id="PR01333">
    <property type="entry name" value="2POREKCHANEL"/>
</dbReference>
<dbReference type="PRINTS" id="PR01588">
    <property type="entry name" value="THIKCHANNEL"/>
</dbReference>
<dbReference type="SUPFAM" id="SSF81324">
    <property type="entry name" value="Voltage-gated potassium channels"/>
    <property type="match status" value="2"/>
</dbReference>
<organism>
    <name type="scientific">Homo sapiens</name>
    <name type="common">Human</name>
    <dbReference type="NCBI Taxonomy" id="9606"/>
    <lineage>
        <taxon>Eukaryota</taxon>
        <taxon>Metazoa</taxon>
        <taxon>Chordata</taxon>
        <taxon>Craniata</taxon>
        <taxon>Vertebrata</taxon>
        <taxon>Euteleostomi</taxon>
        <taxon>Mammalia</taxon>
        <taxon>Eutheria</taxon>
        <taxon>Euarchontoglires</taxon>
        <taxon>Primates</taxon>
        <taxon>Haplorrhini</taxon>
        <taxon>Catarrhini</taxon>
        <taxon>Hominidae</taxon>
        <taxon>Homo</taxon>
    </lineage>
</organism>
<feature type="chain" id="PRO_0000101760" description="Potassium channel subfamily K member 12">
    <location>
        <begin position="1"/>
        <end position="430"/>
    </location>
</feature>
<feature type="topological domain" description="Cytoplasmic" evidence="2">
    <location>
        <begin position="1"/>
        <end position="38"/>
    </location>
</feature>
<feature type="transmembrane region" description="Helical" evidence="2">
    <location>
        <begin position="39"/>
        <end position="59"/>
    </location>
</feature>
<feature type="intramembrane region" description="Pore-forming; Name=Pore-forming 1" evidence="2">
    <location>
        <begin position="114"/>
        <end position="134"/>
    </location>
</feature>
<feature type="transmembrane region" description="Helical" evidence="2">
    <location>
        <begin position="145"/>
        <end position="165"/>
    </location>
</feature>
<feature type="topological domain" description="Cytoplasmic" evidence="2">
    <location>
        <begin position="166"/>
        <end position="212"/>
    </location>
</feature>
<feature type="transmembrane region" description="Helical" evidence="2">
    <location>
        <begin position="213"/>
        <end position="233"/>
    </location>
</feature>
<feature type="intramembrane region" description="Pore-forming; Name=Pore-forming 2" evidence="2">
    <location>
        <begin position="243"/>
        <end position="263"/>
    </location>
</feature>
<feature type="transmembrane region" description="Helical" evidence="2">
    <location>
        <begin position="282"/>
        <end position="302"/>
    </location>
</feature>
<feature type="topological domain" description="Cytoplasmic" evidence="2">
    <location>
        <begin position="303"/>
        <end position="430"/>
    </location>
</feature>
<feature type="region of interest" description="ER retention/retrieval signal" evidence="3">
    <location>
        <begin position="11"/>
        <end position="16"/>
    </location>
</feature>
<feature type="region of interest" description="Selectivity filter 1" evidence="1">
    <location>
        <begin position="129"/>
        <end position="134"/>
    </location>
</feature>
<feature type="region of interest" description="Selectivity filter 2" evidence="1">
    <location>
        <begin position="256"/>
        <end position="261"/>
    </location>
</feature>
<feature type="binding site" evidence="1">
    <location>
        <position position="129"/>
    </location>
    <ligand>
        <name>K(+)</name>
        <dbReference type="ChEBI" id="CHEBI:29103"/>
        <label>1</label>
    </ligand>
</feature>
<feature type="binding site" evidence="1">
    <location>
        <position position="129"/>
    </location>
    <ligand>
        <name>K(+)</name>
        <dbReference type="ChEBI" id="CHEBI:29103"/>
        <label>4</label>
    </ligand>
</feature>
<feature type="binding site" evidence="1">
    <location>
        <position position="130"/>
    </location>
    <ligand>
        <name>K(+)</name>
        <dbReference type="ChEBI" id="CHEBI:29103"/>
        <label>1</label>
    </ligand>
</feature>
<feature type="binding site" evidence="1">
    <location>
        <position position="130"/>
    </location>
    <ligand>
        <name>K(+)</name>
        <dbReference type="ChEBI" id="CHEBI:29103"/>
        <label>2</label>
    </ligand>
</feature>
<feature type="binding site" evidence="1">
    <location>
        <position position="131"/>
    </location>
    <ligand>
        <name>K(+)</name>
        <dbReference type="ChEBI" id="CHEBI:29103"/>
        <label>2</label>
    </ligand>
</feature>
<feature type="binding site" evidence="1">
    <location>
        <position position="131"/>
    </location>
    <ligand>
        <name>K(+)</name>
        <dbReference type="ChEBI" id="CHEBI:29103"/>
        <label>3</label>
    </ligand>
</feature>
<feature type="binding site" evidence="1">
    <location>
        <position position="256"/>
    </location>
    <ligand>
        <name>K(+)</name>
        <dbReference type="ChEBI" id="CHEBI:29103"/>
        <label>1</label>
    </ligand>
</feature>
<feature type="binding site" evidence="1">
    <location>
        <position position="256"/>
    </location>
    <ligand>
        <name>K(+)</name>
        <dbReference type="ChEBI" id="CHEBI:29103"/>
        <label>4</label>
    </ligand>
</feature>
<feature type="binding site" evidence="1">
    <location>
        <position position="257"/>
    </location>
    <ligand>
        <name>K(+)</name>
        <dbReference type="ChEBI" id="CHEBI:29103"/>
        <label>1</label>
    </ligand>
</feature>
<feature type="binding site" evidence="1">
    <location>
        <position position="257"/>
    </location>
    <ligand>
        <name>K(+)</name>
        <dbReference type="ChEBI" id="CHEBI:29103"/>
        <label>2</label>
    </ligand>
</feature>
<feature type="binding site" evidence="1">
    <location>
        <position position="258"/>
    </location>
    <ligand>
        <name>K(+)</name>
        <dbReference type="ChEBI" id="CHEBI:29103"/>
        <label>2</label>
    </ligand>
</feature>
<feature type="binding site" evidence="1">
    <location>
        <position position="258"/>
    </location>
    <ligand>
        <name>K(+)</name>
        <dbReference type="ChEBI" id="CHEBI:29103"/>
        <label>3</label>
    </ligand>
</feature>
<feature type="binding site" evidence="1">
    <location>
        <position position="259"/>
    </location>
    <ligand>
        <name>K(+)</name>
        <dbReference type="ChEBI" id="CHEBI:29103"/>
        <label>3</label>
    </ligand>
</feature>
<feature type="glycosylation site" description="N-linked (GlcNAc...) asparagine" evidence="2">
    <location>
        <position position="78"/>
    </location>
</feature>
<feature type="mutagenesis site" description="Disrupts ER retention/retrieval signal resulting in localization at the plasma membrane and K(+) channel conductance; when associated with A-12; A-14; A-15 and A-16. Results in 174-fold increase in current amplitude; when associated with P-155; D-158; A-12; A-14; A-15 and A-16." evidence="3 4">
    <original>R</original>
    <variation>A</variation>
    <location>
        <position position="11"/>
    </location>
</feature>
<feature type="mutagenesis site" description="Disrupts ER retention/retrieval signal resulting in localization at the plasma membrane and K(+) channel conductance; when associated with A-11; A-14; A-15 and A-16. Results in 174 -fold increase in current amplitude; when associated with P-155; D-158; A-11; A-14; A-15 and A-16." evidence="3 4">
    <original>R</original>
    <variation>A</variation>
    <location>
        <position position="12"/>
    </location>
</feature>
<feature type="mutagenesis site" description="Mimics the dephosphorylated state which decreases trafficking from the ER to the plasma membrane." evidence="3">
    <original>S</original>
    <variation>A</variation>
    <location>
        <position position="13"/>
    </location>
</feature>
<feature type="mutagenesis site" description="Mimics the phosphorylated state which increases trafficking from the ER to the plasma membrane and leads to increased K(+) currents." evidence="3">
    <original>S</original>
    <variation>D</variation>
    <location>
        <position position="13"/>
    </location>
</feature>
<feature type="mutagenesis site" description="Disrupts ER retention/retrieval signal resulting in localization at the plasma membrane and K(+) channel conductance; when associated with A-11; A-12; A-15 and A-16. Results in 174-fold increase in current amplitude; when associated with P-155; D-158; A-11; A-12; A-15 and A-16." evidence="3 4">
    <original>R</original>
    <variation>A</variation>
    <location>
        <position position="14"/>
    </location>
</feature>
<feature type="mutagenesis site" description="Disrupts ER retention/retrieval signal resulting in localization at the plasma membrane and K(+) channel conductance; when associated with A-11; A-12; A-14 and A-16. Results in 174-fold increase in current amplitude; when associated with P-155; D-158; A-11; A-12; A-14 and A-16." evidence="3 4">
    <original>R</original>
    <variation>A</variation>
    <location>
        <position position="15"/>
    </location>
</feature>
<feature type="mutagenesis site" description="Disrupts ER retention/retrieval signal resulting in localization at the plasma membrane and K(+) channel conductance; when associated with A-11; A-12; A-14 and A-15. Results in 174 -fold increase in current amplitude; when associated with P-155; D-158; A-11; A-12; A-14 and A-15." evidence="3 4">
    <original>R</original>
    <variation>A</variation>
    <location>
        <position position="16"/>
    </location>
</feature>
<feature type="mutagenesis site" description="Acts as a dominant negative when it assembles with wild-type subunit, abolishing K(+) flux." evidence="3 4">
    <original>G</original>
    <variation>E</variation>
    <location>
        <position position="131"/>
    </location>
</feature>
<feature type="mutagenesis site" description="Increases channel basal activity. Results in 7-fold increase in current amplitude. Displays additive gating effects and results in a 19-fold increase in current amplitude; when associated with D-158. Results in 174-fold increase in current amplitude; when associated with D-158; A-11; A-12; A-14; A-15 and A-16. Does not affect channel ion selectivity, pH sensitivity nor inhibition by halothane." evidence="3 4">
    <original>A</original>
    <variation>P</variation>
    <location>
        <position position="155"/>
    </location>
</feature>
<feature type="mutagenesis site" description="Increases channel basal activity. Results in 6-fold increase in current amplitude. Confers nonlinear I-V relationship, with currents that saturate upon strong membrane depolarization around 0 mV. Displays additive gating effects and results in a 19-fold increase in current amplitude; when associated with P-155. Results in 174-fold increase in current amplitude; when associated with P-155; A-11; A-12; A-14; A-15 and A-16." evidence="3 4">
    <original>I</original>
    <variation>D</variation>
    <location>
        <position position="158"/>
    </location>
</feature>
<feature type="mutagenesis site" description="Does not affect channel basal activity." evidence="3">
    <original>I</original>
    <variation>G</variation>
    <location>
        <position position="158"/>
    </location>
</feature>
<feature type="mutagenesis site" description="Does not affect channel basal activity." evidence="3">
    <original>L</original>
    <variation>G</variation>
    <location>
        <position position="163"/>
    </location>
</feature>
<feature type="mutagenesis site" description="Does not affect channel basal activity." evidence="3">
    <original>L</original>
    <variation>G</variation>
    <location>
        <position position="165"/>
    </location>
</feature>